<comment type="function">
    <text evidence="1">NPY is implicated in the control of feeding and in secretion of gonadotrophin-release hormone.</text>
</comment>
<comment type="subcellular location">
    <subcellularLocation>
        <location>Secreted</location>
    </subcellularLocation>
</comment>
<comment type="tissue specificity">
    <text evidence="2">Expressed throughout the brain with highest levels of expression in medial pallium, basal forebrain, preoptic area, midbrain tegmentum and trigeminal nucleus.</text>
</comment>
<comment type="mass spectrometry">
    <molecule>Neuropeptide Y</molecule>
</comment>
<comment type="similarity">
    <text evidence="3">Belongs to the NPY family.</text>
</comment>
<keyword id="KW-0027">Amidation</keyword>
<keyword id="KW-0165">Cleavage on pair of basic residues</keyword>
<keyword id="KW-0903">Direct protein sequencing</keyword>
<keyword id="KW-0527">Neuropeptide</keyword>
<keyword id="KW-0964">Secreted</keyword>
<keyword id="KW-0732">Signal</keyword>
<sequence>MQGSMRLWLSVLTFTLSLLICLGTLADAYPSKPDNPGEDAPAEDMAKYYSALRHYINLITRQRYGKRSNPETMVSDVWWRESTENIPRSRFEDPSMW</sequence>
<evidence type="ECO:0000250" key="1">
    <source>
        <dbReference type="UniProtKB" id="P33689"/>
    </source>
</evidence>
<evidence type="ECO:0000269" key="2">
    <source>
    </source>
</evidence>
<evidence type="ECO:0000305" key="3"/>
<evidence type="ECO:0000312" key="4">
    <source>
        <dbReference type="EMBL" id="AAD48033.1"/>
    </source>
</evidence>
<accession>Q9PW68</accession>
<dbReference type="EMBL" id="AF167559">
    <property type="protein sequence ID" value="AAD48033.1"/>
    <property type="molecule type" value="mRNA"/>
</dbReference>
<dbReference type="GO" id="GO:0005615">
    <property type="term" value="C:extracellular space"/>
    <property type="evidence" value="ECO:0007669"/>
    <property type="project" value="TreeGrafter"/>
</dbReference>
<dbReference type="GO" id="GO:0005184">
    <property type="term" value="F:neuropeptide hormone activity"/>
    <property type="evidence" value="ECO:0007669"/>
    <property type="project" value="TreeGrafter"/>
</dbReference>
<dbReference type="GO" id="GO:0031841">
    <property type="term" value="F:neuropeptide Y receptor binding"/>
    <property type="evidence" value="ECO:0007669"/>
    <property type="project" value="TreeGrafter"/>
</dbReference>
<dbReference type="GO" id="GO:0007631">
    <property type="term" value="P:feeding behavior"/>
    <property type="evidence" value="ECO:0007669"/>
    <property type="project" value="TreeGrafter"/>
</dbReference>
<dbReference type="GO" id="GO:0007218">
    <property type="term" value="P:neuropeptide signaling pathway"/>
    <property type="evidence" value="ECO:0007669"/>
    <property type="project" value="UniProtKB-KW"/>
</dbReference>
<dbReference type="CDD" id="cd00126">
    <property type="entry name" value="PAH"/>
    <property type="match status" value="1"/>
</dbReference>
<dbReference type="Gene3D" id="6.10.250.900">
    <property type="match status" value="1"/>
</dbReference>
<dbReference type="InterPro" id="IPR001955">
    <property type="entry name" value="Pancreatic_hormone-like"/>
</dbReference>
<dbReference type="InterPro" id="IPR020392">
    <property type="entry name" value="Pancreatic_hormone-like_CS"/>
</dbReference>
<dbReference type="PANTHER" id="PTHR10533">
    <property type="entry name" value="NEUROPEPTIDE Y/PANCREATIC HORMONE/PEPTIDE YY"/>
    <property type="match status" value="1"/>
</dbReference>
<dbReference type="PANTHER" id="PTHR10533:SF5">
    <property type="entry name" value="PRO-NEUROPEPTIDE Y"/>
    <property type="match status" value="1"/>
</dbReference>
<dbReference type="Pfam" id="PF00159">
    <property type="entry name" value="Hormone_3"/>
    <property type="match status" value="1"/>
</dbReference>
<dbReference type="PRINTS" id="PR00278">
    <property type="entry name" value="PANCHORMONE"/>
</dbReference>
<dbReference type="SMART" id="SM00309">
    <property type="entry name" value="PAH"/>
    <property type="match status" value="1"/>
</dbReference>
<dbReference type="PROSITE" id="PS00265">
    <property type="entry name" value="PANCREATIC_HORMONE_1"/>
    <property type="match status" value="1"/>
</dbReference>
<dbReference type="PROSITE" id="PS50276">
    <property type="entry name" value="PANCREATIC_HORMONE_2"/>
    <property type="match status" value="1"/>
</dbReference>
<protein>
    <recommendedName>
        <fullName>Pro-neuropeptide Y</fullName>
    </recommendedName>
    <component>
        <recommendedName>
            <fullName>Neuropeptide Y</fullName>
        </recommendedName>
        <alternativeName>
            <fullName>Neuropeptide tyrosine</fullName>
            <shortName>NPY</shortName>
        </alternativeName>
    </component>
    <component>
        <recommendedName>
            <fullName>C-flanking peptide of NPY</fullName>
            <shortName>CPON</shortName>
        </recommendedName>
    </component>
</protein>
<feature type="signal peptide" evidence="2">
    <location>
        <begin position="1"/>
        <end position="28"/>
    </location>
</feature>
<feature type="peptide" id="PRO_0000025351" description="Neuropeptide Y">
    <location>
        <begin position="29"/>
        <end position="64"/>
    </location>
</feature>
<feature type="peptide" id="PRO_0000025352" description="C-flanking peptide of NPY">
    <location>
        <begin position="68"/>
        <end position="97"/>
    </location>
</feature>
<feature type="modified residue" description="Tyrosine amide" evidence="2">
    <location>
        <position position="64"/>
    </location>
</feature>
<organism evidence="4">
    <name type="scientific">Typhlonectes natans</name>
    <name type="common">Rubber eel</name>
    <dbReference type="NCBI Taxonomy" id="8456"/>
    <lineage>
        <taxon>Eukaryota</taxon>
        <taxon>Metazoa</taxon>
        <taxon>Chordata</taxon>
        <taxon>Craniata</taxon>
        <taxon>Vertebrata</taxon>
        <taxon>Euteleostomi</taxon>
        <taxon>Amphibia</taxon>
        <taxon>Gymnophiona</taxon>
        <taxon>Typhlonectidae</taxon>
        <taxon>Typhlonectes</taxon>
    </lineage>
</organism>
<reference evidence="3 4" key="1">
    <citation type="journal article" date="2001" name="Peptides">
        <title>Characterization and distribution of neuropeptide Y in the brain of a caecilian amphibian.</title>
        <authorList>
            <person name="Ebersole T.J."/>
            <person name="Conlon J.M."/>
            <person name="Goetz F.W."/>
            <person name="Boyd S.K."/>
        </authorList>
    </citation>
    <scope>NUCLEOTIDE SEQUENCE [MRNA]</scope>
    <scope>PROTEIN SEQUENCE OF 29-64</scope>
    <scope>AMIDATION AT TYR-64</scope>
    <scope>TISSUE SPECIFICITY</scope>
    <scope>MASS SPECTROMETRY</scope>
    <source>
        <tissue>Brain</tissue>
    </source>
</reference>
<gene>
    <name type="primary">npy</name>
</gene>
<proteinExistence type="evidence at protein level"/>
<name>NPY_TYPNA</name>